<sequence>MRSAQVYRWQIPMDAGVVLRDRRLKTRDGLYVCLREGEREGWGEISPLPGFSQETWEEAQSVLLAWVNNWLAGDCELPQMPSVAFGVSCALAELTDALPQAANYRAAPLCNGDPDDLILKLADMPGEKVAKVKVGLYEAVRDGMVVNLLLEAIPDLHLRLDANRAWTPLKGQQFAKYVNPDYRHRIAFLEEPCKTRDDSRAFARETGIAIAWDESLREPDFTFVAEEGVRAVVIKPTLTGSLEKVREQVEAAHALGLTAVISSSIESSLGLTQLARIAAWLTPETIPGLDTLDLMQAQQVRRWPGSTLPVVEVDALERLL</sequence>
<protein>
    <recommendedName>
        <fullName evidence="1">o-succinylbenzoate synthase</fullName>
        <shortName evidence="1">OSB synthase</shortName>
        <shortName evidence="1">OSBS</shortName>
        <ecNumber evidence="1">4.2.1.113</ecNumber>
    </recommendedName>
    <alternativeName>
        <fullName evidence="1">4-(2'-carboxyphenyl)-4-oxybutyric acid synthase</fullName>
    </alternativeName>
    <alternativeName>
        <fullName evidence="1">o-succinylbenzoic acid synthase</fullName>
    </alternativeName>
</protein>
<evidence type="ECO:0000255" key="1">
    <source>
        <dbReference type="HAMAP-Rule" id="MF_00470"/>
    </source>
</evidence>
<feature type="chain" id="PRO_1000125571" description="o-succinylbenzoate synthase">
    <location>
        <begin position="1"/>
        <end position="320"/>
    </location>
</feature>
<feature type="active site" description="Proton donor" evidence="1">
    <location>
        <position position="133"/>
    </location>
</feature>
<feature type="active site" description="Proton acceptor" evidence="1">
    <location>
        <position position="235"/>
    </location>
</feature>
<feature type="binding site" evidence="1">
    <location>
        <position position="161"/>
    </location>
    <ligand>
        <name>Mg(2+)</name>
        <dbReference type="ChEBI" id="CHEBI:18420"/>
    </ligand>
</feature>
<feature type="binding site" evidence="1">
    <location>
        <position position="190"/>
    </location>
    <ligand>
        <name>Mg(2+)</name>
        <dbReference type="ChEBI" id="CHEBI:18420"/>
    </ligand>
</feature>
<feature type="binding site" evidence="1">
    <location>
        <position position="213"/>
    </location>
    <ligand>
        <name>Mg(2+)</name>
        <dbReference type="ChEBI" id="CHEBI:18420"/>
    </ligand>
</feature>
<gene>
    <name evidence="1" type="primary">menC</name>
    <name type="ordered locus">ECUMN_2604</name>
</gene>
<comment type="function">
    <text evidence="1">Converts 2-succinyl-6-hydroxy-2,4-cyclohexadiene-1-carboxylate (SHCHC) to 2-succinylbenzoate (OSB).</text>
</comment>
<comment type="catalytic activity">
    <reaction evidence="1">
        <text>(1R,6R)-6-hydroxy-2-succinyl-cyclohexa-2,4-diene-1-carboxylate = 2-succinylbenzoate + H2O</text>
        <dbReference type="Rhea" id="RHEA:10196"/>
        <dbReference type="ChEBI" id="CHEBI:15377"/>
        <dbReference type="ChEBI" id="CHEBI:18325"/>
        <dbReference type="ChEBI" id="CHEBI:58689"/>
        <dbReference type="EC" id="4.2.1.113"/>
    </reaction>
</comment>
<comment type="cofactor">
    <cofactor evidence="1">
        <name>a divalent metal cation</name>
        <dbReference type="ChEBI" id="CHEBI:60240"/>
    </cofactor>
</comment>
<comment type="pathway">
    <text evidence="1">Quinol/quinone metabolism; 1,4-dihydroxy-2-naphthoate biosynthesis; 1,4-dihydroxy-2-naphthoate from chorismate: step 4/7.</text>
</comment>
<comment type="pathway">
    <text evidence="1">Quinol/quinone metabolism; menaquinone biosynthesis.</text>
</comment>
<comment type="similarity">
    <text evidence="1">Belongs to the mandelate racemase/muconate lactonizing enzyme family. MenC type 1 subfamily.</text>
</comment>
<proteinExistence type="inferred from homology"/>
<name>MENC_ECOLU</name>
<dbReference type="EC" id="4.2.1.113" evidence="1"/>
<dbReference type="EMBL" id="CU928163">
    <property type="protein sequence ID" value="CAR13786.1"/>
    <property type="molecule type" value="Genomic_DNA"/>
</dbReference>
<dbReference type="RefSeq" id="WP_001255627.1">
    <property type="nucleotide sequence ID" value="NC_011751.1"/>
</dbReference>
<dbReference type="RefSeq" id="YP_002413314.1">
    <property type="nucleotide sequence ID" value="NC_011751.1"/>
</dbReference>
<dbReference type="SMR" id="B7N5M7"/>
<dbReference type="STRING" id="585056.ECUMN_2604"/>
<dbReference type="KEGG" id="eum:ECUMN_2604"/>
<dbReference type="PATRIC" id="fig|585056.7.peg.2784"/>
<dbReference type="HOGENOM" id="CLU_030273_0_1_6"/>
<dbReference type="UniPathway" id="UPA00079"/>
<dbReference type="UniPathway" id="UPA01057">
    <property type="reaction ID" value="UER00165"/>
</dbReference>
<dbReference type="Proteomes" id="UP000007097">
    <property type="component" value="Chromosome"/>
</dbReference>
<dbReference type="GO" id="GO:0000287">
    <property type="term" value="F:magnesium ion binding"/>
    <property type="evidence" value="ECO:0007669"/>
    <property type="project" value="UniProtKB-UniRule"/>
</dbReference>
<dbReference type="GO" id="GO:0043748">
    <property type="term" value="F:O-succinylbenzoate synthase activity"/>
    <property type="evidence" value="ECO:0007669"/>
    <property type="project" value="UniProtKB-EC"/>
</dbReference>
<dbReference type="GO" id="GO:0009234">
    <property type="term" value="P:menaquinone biosynthetic process"/>
    <property type="evidence" value="ECO:0007669"/>
    <property type="project" value="UniProtKB-UniRule"/>
</dbReference>
<dbReference type="CDD" id="cd03320">
    <property type="entry name" value="OSBS"/>
    <property type="match status" value="1"/>
</dbReference>
<dbReference type="FunFam" id="3.20.20.120:FF:000006">
    <property type="entry name" value="o-succinylbenzoate synthase"/>
    <property type="match status" value="1"/>
</dbReference>
<dbReference type="FunFam" id="3.30.390.10:FF:000005">
    <property type="entry name" value="o-succinylbenzoate synthase"/>
    <property type="match status" value="1"/>
</dbReference>
<dbReference type="Gene3D" id="3.20.20.120">
    <property type="entry name" value="Enolase-like C-terminal domain"/>
    <property type="match status" value="1"/>
</dbReference>
<dbReference type="Gene3D" id="3.30.390.10">
    <property type="entry name" value="Enolase-like, N-terminal domain"/>
    <property type="match status" value="1"/>
</dbReference>
<dbReference type="HAMAP" id="MF_00470">
    <property type="entry name" value="MenC_1"/>
    <property type="match status" value="1"/>
</dbReference>
<dbReference type="InterPro" id="IPR036849">
    <property type="entry name" value="Enolase-like_C_sf"/>
</dbReference>
<dbReference type="InterPro" id="IPR029017">
    <property type="entry name" value="Enolase-like_N"/>
</dbReference>
<dbReference type="InterPro" id="IPR029065">
    <property type="entry name" value="Enolase_C-like"/>
</dbReference>
<dbReference type="InterPro" id="IPR013342">
    <property type="entry name" value="Mandelate_racemase_C"/>
</dbReference>
<dbReference type="InterPro" id="IPR010196">
    <property type="entry name" value="OSB_synthase_MenC1"/>
</dbReference>
<dbReference type="InterPro" id="IPR041338">
    <property type="entry name" value="OSBS_N"/>
</dbReference>
<dbReference type="NCBIfam" id="TIGR01927">
    <property type="entry name" value="menC_gam_Gplu"/>
    <property type="match status" value="1"/>
</dbReference>
<dbReference type="NCBIfam" id="NF003473">
    <property type="entry name" value="PRK05105.1"/>
    <property type="match status" value="1"/>
</dbReference>
<dbReference type="PANTHER" id="PTHR48073:SF2">
    <property type="entry name" value="O-SUCCINYLBENZOATE SYNTHASE"/>
    <property type="match status" value="1"/>
</dbReference>
<dbReference type="PANTHER" id="PTHR48073">
    <property type="entry name" value="O-SUCCINYLBENZOATE SYNTHASE-RELATED"/>
    <property type="match status" value="1"/>
</dbReference>
<dbReference type="Pfam" id="PF21508">
    <property type="entry name" value="MenC_N"/>
    <property type="match status" value="1"/>
</dbReference>
<dbReference type="Pfam" id="PF13378">
    <property type="entry name" value="MR_MLE_C"/>
    <property type="match status" value="1"/>
</dbReference>
<dbReference type="SFLD" id="SFLDG00180">
    <property type="entry name" value="muconate_cycloisomerase"/>
    <property type="match status" value="1"/>
</dbReference>
<dbReference type="SFLD" id="SFLDF00009">
    <property type="entry name" value="o-succinylbenzoate_synthase"/>
    <property type="match status" value="1"/>
</dbReference>
<dbReference type="SMART" id="SM00922">
    <property type="entry name" value="MR_MLE"/>
    <property type="match status" value="1"/>
</dbReference>
<dbReference type="SUPFAM" id="SSF51604">
    <property type="entry name" value="Enolase C-terminal domain-like"/>
    <property type="match status" value="1"/>
</dbReference>
<dbReference type="SUPFAM" id="SSF54826">
    <property type="entry name" value="Enolase N-terminal domain-like"/>
    <property type="match status" value="1"/>
</dbReference>
<accession>B7N5M7</accession>
<reference key="1">
    <citation type="journal article" date="2009" name="PLoS Genet.">
        <title>Organised genome dynamics in the Escherichia coli species results in highly diverse adaptive paths.</title>
        <authorList>
            <person name="Touchon M."/>
            <person name="Hoede C."/>
            <person name="Tenaillon O."/>
            <person name="Barbe V."/>
            <person name="Baeriswyl S."/>
            <person name="Bidet P."/>
            <person name="Bingen E."/>
            <person name="Bonacorsi S."/>
            <person name="Bouchier C."/>
            <person name="Bouvet O."/>
            <person name="Calteau A."/>
            <person name="Chiapello H."/>
            <person name="Clermont O."/>
            <person name="Cruveiller S."/>
            <person name="Danchin A."/>
            <person name="Diard M."/>
            <person name="Dossat C."/>
            <person name="Karoui M.E."/>
            <person name="Frapy E."/>
            <person name="Garry L."/>
            <person name="Ghigo J.M."/>
            <person name="Gilles A.M."/>
            <person name="Johnson J."/>
            <person name="Le Bouguenec C."/>
            <person name="Lescat M."/>
            <person name="Mangenot S."/>
            <person name="Martinez-Jehanne V."/>
            <person name="Matic I."/>
            <person name="Nassif X."/>
            <person name="Oztas S."/>
            <person name="Petit M.A."/>
            <person name="Pichon C."/>
            <person name="Rouy Z."/>
            <person name="Ruf C.S."/>
            <person name="Schneider D."/>
            <person name="Tourret J."/>
            <person name="Vacherie B."/>
            <person name="Vallenet D."/>
            <person name="Medigue C."/>
            <person name="Rocha E.P.C."/>
            <person name="Denamur E."/>
        </authorList>
    </citation>
    <scope>NUCLEOTIDE SEQUENCE [LARGE SCALE GENOMIC DNA]</scope>
    <source>
        <strain>UMN026 / ExPEC</strain>
    </source>
</reference>
<keyword id="KW-0456">Lyase</keyword>
<keyword id="KW-0460">Magnesium</keyword>
<keyword id="KW-0474">Menaquinone biosynthesis</keyword>
<keyword id="KW-0479">Metal-binding</keyword>
<organism>
    <name type="scientific">Escherichia coli O17:K52:H18 (strain UMN026 / ExPEC)</name>
    <dbReference type="NCBI Taxonomy" id="585056"/>
    <lineage>
        <taxon>Bacteria</taxon>
        <taxon>Pseudomonadati</taxon>
        <taxon>Pseudomonadota</taxon>
        <taxon>Gammaproteobacteria</taxon>
        <taxon>Enterobacterales</taxon>
        <taxon>Enterobacteriaceae</taxon>
        <taxon>Escherichia</taxon>
    </lineage>
</organism>